<feature type="chain" id="PRO_0000104201" description="Protein transport protein Sec61 subunit gamma">
    <location>
        <begin position="1"/>
        <end position="68"/>
    </location>
</feature>
<feature type="topological domain" description="Cytoplasmic" evidence="3">
    <location>
        <begin position="1"/>
        <end position="32"/>
    </location>
</feature>
<feature type="transmembrane region" description="Helical" evidence="3">
    <location>
        <begin position="33"/>
        <end position="61"/>
    </location>
</feature>
<feature type="topological domain" description="Extracellular" evidence="3">
    <location>
        <begin position="62"/>
        <end position="68"/>
    </location>
</feature>
<proteinExistence type="inferred from homology"/>
<sequence length="68" mass="7635">MDQVMAWVEPGKQFAKDSIRLVKRCTKPDRKEFQKIAVATAIGFAIMGFIGFFVKLIHIPINNIIVGS</sequence>
<comment type="function">
    <text evidence="2">Necessary for protein translocation in the endoplasmic reticulum and multi-pass membrane protein biogenesis.</text>
</comment>
<comment type="subunit">
    <text evidence="1 2">Heterotrimeric complex composed of SEC61-alpha, SEC61-beta and SEC61-gamma (By similarity). Component of the ribosome-associated ER translocon complex (By similarity).</text>
</comment>
<comment type="subcellular location">
    <subcellularLocation>
        <location evidence="1">Endoplasmic reticulum membrane</location>
        <topology evidence="4">Single-pass membrane protein</topology>
    </subcellularLocation>
</comment>
<comment type="similarity">
    <text evidence="4">Belongs to the SecE/SEC61-gamma family.</text>
</comment>
<protein>
    <recommendedName>
        <fullName>Protein transport protein Sec61 subunit gamma</fullName>
    </recommendedName>
</protein>
<name>SC61G_CIOIN</name>
<gene>
    <name type="primary">SEC61G</name>
</gene>
<reference key="1">
    <citation type="submission" date="2000-10" db="EMBL/GenBank/DDBJ databases">
        <title>Some full length of Ciona intestinalis.</title>
        <authorList>
            <person name="Ievolella C."/>
            <person name="Valle G."/>
        </authorList>
    </citation>
    <scope>NUCLEOTIDE SEQUENCE [MRNA]</scope>
</reference>
<evidence type="ECO:0000250" key="1">
    <source>
        <dbReference type="UniProtKB" id="P60058"/>
    </source>
</evidence>
<evidence type="ECO:0000250" key="2">
    <source>
        <dbReference type="UniProtKB" id="P60059"/>
    </source>
</evidence>
<evidence type="ECO:0000255" key="3"/>
<evidence type="ECO:0000305" key="4"/>
<accession>Q8I7D9</accession>
<organism>
    <name type="scientific">Ciona intestinalis</name>
    <name type="common">Transparent sea squirt</name>
    <name type="synonym">Ascidia intestinalis</name>
    <dbReference type="NCBI Taxonomy" id="7719"/>
    <lineage>
        <taxon>Eukaryota</taxon>
        <taxon>Metazoa</taxon>
        <taxon>Chordata</taxon>
        <taxon>Tunicata</taxon>
        <taxon>Ascidiacea</taxon>
        <taxon>Phlebobranchia</taxon>
        <taxon>Cionidae</taxon>
        <taxon>Ciona</taxon>
    </lineage>
</organism>
<keyword id="KW-0256">Endoplasmic reticulum</keyword>
<keyword id="KW-0472">Membrane</keyword>
<keyword id="KW-0653">Protein transport</keyword>
<keyword id="KW-1185">Reference proteome</keyword>
<keyword id="KW-0811">Translocation</keyword>
<keyword id="KW-0812">Transmembrane</keyword>
<keyword id="KW-1133">Transmembrane helix</keyword>
<keyword id="KW-0813">Transport</keyword>
<dbReference type="EMBL" id="AJ297727">
    <property type="protein sequence ID" value="CAC82549.1"/>
    <property type="molecule type" value="mRNA"/>
</dbReference>
<dbReference type="RefSeq" id="NP_001027676.1">
    <property type="nucleotide sequence ID" value="NM_001032504.1"/>
</dbReference>
<dbReference type="SMR" id="Q8I7D9"/>
<dbReference type="FunCoup" id="Q8I7D9">
    <property type="interactions" value="326"/>
</dbReference>
<dbReference type="STRING" id="7719.ENSCINP00000030766"/>
<dbReference type="Ensembl" id="ENSCINT00000036066.1">
    <property type="protein sequence ID" value="ENSCINP00000030766.1"/>
    <property type="gene ID" value="ENSCING00000024485.1"/>
</dbReference>
<dbReference type="Ensembl" id="ENSCINT00000036955.1">
    <property type="protein sequence ID" value="ENSCINP00000031557.1"/>
    <property type="gene ID" value="ENSCING00000018828.1"/>
</dbReference>
<dbReference type="GeneID" id="445686"/>
<dbReference type="KEGG" id="cin:445686"/>
<dbReference type="CTD" id="23480"/>
<dbReference type="eggNOG" id="KOG3498">
    <property type="taxonomic scope" value="Eukaryota"/>
</dbReference>
<dbReference type="GeneTree" id="ENSGT00390000001319"/>
<dbReference type="HOGENOM" id="CLU_167752_1_1_1"/>
<dbReference type="InParanoid" id="Q8I7D9"/>
<dbReference type="OMA" id="KPDQKEY"/>
<dbReference type="OrthoDB" id="2401875at2759"/>
<dbReference type="TreeFam" id="TF300232"/>
<dbReference type="Proteomes" id="UP000008144">
    <property type="component" value="Chromosome 11"/>
</dbReference>
<dbReference type="Proteomes" id="UP000008144">
    <property type="component" value="Chromosome 7"/>
</dbReference>
<dbReference type="GO" id="GO:0071261">
    <property type="term" value="C:Ssh1 translocon complex"/>
    <property type="evidence" value="ECO:0000318"/>
    <property type="project" value="GO_Central"/>
</dbReference>
<dbReference type="GO" id="GO:0008320">
    <property type="term" value="F:protein transmembrane transporter activity"/>
    <property type="evidence" value="ECO:0000318"/>
    <property type="project" value="GO_Central"/>
</dbReference>
<dbReference type="GO" id="GO:0043022">
    <property type="term" value="F:ribosome binding"/>
    <property type="evidence" value="ECO:0000250"/>
    <property type="project" value="UniProtKB"/>
</dbReference>
<dbReference type="GO" id="GO:0031204">
    <property type="term" value="P:post-translational protein targeting to membrane, translocation"/>
    <property type="evidence" value="ECO:0000318"/>
    <property type="project" value="GO_Central"/>
</dbReference>
<dbReference type="FunFam" id="1.20.5.820:FF:000001">
    <property type="entry name" value="Transport protein Sec61 subunit gamma"/>
    <property type="match status" value="1"/>
</dbReference>
<dbReference type="Gene3D" id="1.20.5.820">
    <property type="entry name" value="Preprotein translocase SecE subunit"/>
    <property type="match status" value="1"/>
</dbReference>
<dbReference type="HAMAP" id="MF_00422">
    <property type="entry name" value="SecE"/>
    <property type="match status" value="1"/>
</dbReference>
<dbReference type="InterPro" id="IPR023391">
    <property type="entry name" value="Prot_translocase_SecE_dom_sf"/>
</dbReference>
<dbReference type="InterPro" id="IPR008158">
    <property type="entry name" value="Translocase_Sec61-g"/>
</dbReference>
<dbReference type="InterPro" id="IPR001901">
    <property type="entry name" value="Translocase_SecE/Sec61-g"/>
</dbReference>
<dbReference type="NCBIfam" id="TIGR00327">
    <property type="entry name" value="secE_euk_arch"/>
    <property type="match status" value="1"/>
</dbReference>
<dbReference type="PANTHER" id="PTHR12309">
    <property type="entry name" value="SEC61 GAMMA SUBUNIT"/>
    <property type="match status" value="1"/>
</dbReference>
<dbReference type="Pfam" id="PF00584">
    <property type="entry name" value="SecE"/>
    <property type="match status" value="1"/>
</dbReference>
<dbReference type="SUPFAM" id="SSF103456">
    <property type="entry name" value="Preprotein translocase SecE subunit"/>
    <property type="match status" value="1"/>
</dbReference>
<dbReference type="PROSITE" id="PS01067">
    <property type="entry name" value="SECE_SEC61G"/>
    <property type="match status" value="1"/>
</dbReference>